<gene>
    <name evidence="5" type="primary">CYSTM1</name>
    <name evidence="7" type="ordered locus">At1g05340</name>
    <name evidence="8" type="ORF">YUP8H12.4</name>
</gene>
<feature type="chain" id="PRO_0000454798" description="Protein CYSTEINE-RICH TRANSMEMBRANE MODULE 1">
    <location>
        <begin position="1"/>
        <end position="72"/>
    </location>
</feature>
<feature type="transmembrane region" description="Helical" evidence="1">
    <location>
        <begin position="49"/>
        <end position="65"/>
    </location>
</feature>
<feature type="region of interest" description="Disordered" evidence="2">
    <location>
        <begin position="1"/>
        <end position="46"/>
    </location>
</feature>
<feature type="compositionally biased region" description="Polar residues" evidence="2">
    <location>
        <begin position="1"/>
        <end position="11"/>
    </location>
</feature>
<feature type="compositionally biased region" description="Pro residues" evidence="2">
    <location>
        <begin position="13"/>
        <end position="29"/>
    </location>
</feature>
<proteinExistence type="evidence at protein level"/>
<evidence type="ECO:0000255" key="1"/>
<evidence type="ECO:0000256" key="2">
    <source>
        <dbReference type="SAM" id="MobiDB-lite"/>
    </source>
</evidence>
<evidence type="ECO:0000269" key="3">
    <source>
    </source>
</evidence>
<evidence type="ECO:0000269" key="4">
    <source>
    </source>
</evidence>
<evidence type="ECO:0000303" key="5">
    <source>
    </source>
</evidence>
<evidence type="ECO:0000305" key="6"/>
<evidence type="ECO:0000312" key="7">
    <source>
        <dbReference type="Araport" id="AT1G05340"/>
    </source>
</evidence>
<evidence type="ECO:0000312" key="8">
    <source>
        <dbReference type="EMBL" id="AAB71443.1"/>
    </source>
</evidence>
<reference key="1">
    <citation type="journal article" date="2000" name="Nature">
        <title>Sequence and analysis of chromosome 1 of the plant Arabidopsis thaliana.</title>
        <authorList>
            <person name="Theologis A."/>
            <person name="Ecker J.R."/>
            <person name="Palm C.J."/>
            <person name="Federspiel N.A."/>
            <person name="Kaul S."/>
            <person name="White O."/>
            <person name="Alonso J."/>
            <person name="Altafi H."/>
            <person name="Araujo R."/>
            <person name="Bowman C.L."/>
            <person name="Brooks S.Y."/>
            <person name="Buehler E."/>
            <person name="Chan A."/>
            <person name="Chao Q."/>
            <person name="Chen H."/>
            <person name="Cheuk R.F."/>
            <person name="Chin C.W."/>
            <person name="Chung M.K."/>
            <person name="Conn L."/>
            <person name="Conway A.B."/>
            <person name="Conway A.R."/>
            <person name="Creasy T.H."/>
            <person name="Dewar K."/>
            <person name="Dunn P."/>
            <person name="Etgu P."/>
            <person name="Feldblyum T.V."/>
            <person name="Feng J.-D."/>
            <person name="Fong B."/>
            <person name="Fujii C.Y."/>
            <person name="Gill J.E."/>
            <person name="Goldsmith A.D."/>
            <person name="Haas B."/>
            <person name="Hansen N.F."/>
            <person name="Hughes B."/>
            <person name="Huizar L."/>
            <person name="Hunter J.L."/>
            <person name="Jenkins J."/>
            <person name="Johnson-Hopson C."/>
            <person name="Khan S."/>
            <person name="Khaykin E."/>
            <person name="Kim C.J."/>
            <person name="Koo H.L."/>
            <person name="Kremenetskaia I."/>
            <person name="Kurtz D.B."/>
            <person name="Kwan A."/>
            <person name="Lam B."/>
            <person name="Langin-Hooper S."/>
            <person name="Lee A."/>
            <person name="Lee J.M."/>
            <person name="Lenz C.A."/>
            <person name="Li J.H."/>
            <person name="Li Y.-P."/>
            <person name="Lin X."/>
            <person name="Liu S.X."/>
            <person name="Liu Z.A."/>
            <person name="Luros J.S."/>
            <person name="Maiti R."/>
            <person name="Marziali A."/>
            <person name="Militscher J."/>
            <person name="Miranda M."/>
            <person name="Nguyen M."/>
            <person name="Nierman W.C."/>
            <person name="Osborne B.I."/>
            <person name="Pai G."/>
            <person name="Peterson J."/>
            <person name="Pham P.K."/>
            <person name="Rizzo M."/>
            <person name="Rooney T."/>
            <person name="Rowley D."/>
            <person name="Sakano H."/>
            <person name="Salzberg S.L."/>
            <person name="Schwartz J.R."/>
            <person name="Shinn P."/>
            <person name="Southwick A.M."/>
            <person name="Sun H."/>
            <person name="Tallon L.J."/>
            <person name="Tambunga G."/>
            <person name="Toriumi M.J."/>
            <person name="Town C.D."/>
            <person name="Utterback T."/>
            <person name="Van Aken S."/>
            <person name="Vaysberg M."/>
            <person name="Vysotskaia V.S."/>
            <person name="Walker M."/>
            <person name="Wu D."/>
            <person name="Yu G."/>
            <person name="Fraser C.M."/>
            <person name="Venter J.C."/>
            <person name="Davis R.W."/>
        </authorList>
    </citation>
    <scope>NUCLEOTIDE SEQUENCE [LARGE SCALE GENOMIC DNA]</scope>
    <source>
        <strain>cv. Columbia</strain>
    </source>
</reference>
<reference key="2">
    <citation type="journal article" date="2017" name="Plant J.">
        <title>Araport11: a complete reannotation of the Arabidopsis thaliana reference genome.</title>
        <authorList>
            <person name="Cheng C.Y."/>
            <person name="Krishnakumar V."/>
            <person name="Chan A.P."/>
            <person name="Thibaud-Nissen F."/>
            <person name="Schobel S."/>
            <person name="Town C.D."/>
        </authorList>
    </citation>
    <scope>GENOME REANNOTATION</scope>
    <source>
        <strain>cv. Columbia</strain>
    </source>
</reference>
<reference key="3">
    <citation type="journal article" date="2003" name="Science">
        <title>Empirical analysis of transcriptional activity in the Arabidopsis genome.</title>
        <authorList>
            <person name="Yamada K."/>
            <person name="Lim J."/>
            <person name="Dale J.M."/>
            <person name="Chen H."/>
            <person name="Shinn P."/>
            <person name="Palm C.J."/>
            <person name="Southwick A.M."/>
            <person name="Wu H.C."/>
            <person name="Kim C.J."/>
            <person name="Nguyen M."/>
            <person name="Pham P.K."/>
            <person name="Cheuk R.F."/>
            <person name="Karlin-Newmann G."/>
            <person name="Liu S.X."/>
            <person name="Lam B."/>
            <person name="Sakano H."/>
            <person name="Wu T."/>
            <person name="Yu G."/>
            <person name="Miranda M."/>
            <person name="Quach H.L."/>
            <person name="Tripp M."/>
            <person name="Chang C.H."/>
            <person name="Lee J.M."/>
            <person name="Toriumi M.J."/>
            <person name="Chan M.M."/>
            <person name="Tang C.C."/>
            <person name="Onodera C.S."/>
            <person name="Deng J.M."/>
            <person name="Akiyama K."/>
            <person name="Ansari Y."/>
            <person name="Arakawa T."/>
            <person name="Banh J."/>
            <person name="Banno F."/>
            <person name="Bowser L."/>
            <person name="Brooks S.Y."/>
            <person name="Carninci P."/>
            <person name="Chao Q."/>
            <person name="Choy N."/>
            <person name="Enju A."/>
            <person name="Goldsmith A.D."/>
            <person name="Gurjal M."/>
            <person name="Hansen N.F."/>
            <person name="Hayashizaki Y."/>
            <person name="Johnson-Hopson C."/>
            <person name="Hsuan V.W."/>
            <person name="Iida K."/>
            <person name="Karnes M."/>
            <person name="Khan S."/>
            <person name="Koesema E."/>
            <person name="Ishida J."/>
            <person name="Jiang P.X."/>
            <person name="Jones T."/>
            <person name="Kawai J."/>
            <person name="Kamiya A."/>
            <person name="Meyers C."/>
            <person name="Nakajima M."/>
            <person name="Narusaka M."/>
            <person name="Seki M."/>
            <person name="Sakurai T."/>
            <person name="Satou M."/>
            <person name="Tamse R."/>
            <person name="Vaysberg M."/>
            <person name="Wallender E.K."/>
            <person name="Wong C."/>
            <person name="Yamamura Y."/>
            <person name="Yuan S."/>
            <person name="Shinozaki K."/>
            <person name="Davis R.W."/>
            <person name="Theologis A."/>
            <person name="Ecker J.R."/>
        </authorList>
    </citation>
    <scope>NUCLEOTIDE SEQUENCE [LARGE SCALE MRNA]</scope>
    <source>
        <strain>cv. Columbia</strain>
    </source>
</reference>
<reference key="4">
    <citation type="submission" date="2006-07" db="EMBL/GenBank/DDBJ databases">
        <title>Large-scale analysis of RIKEN Arabidopsis full-length (RAFL) cDNAs.</title>
        <authorList>
            <person name="Totoki Y."/>
            <person name="Seki M."/>
            <person name="Ishida J."/>
            <person name="Nakajima M."/>
            <person name="Enju A."/>
            <person name="Kamiya A."/>
            <person name="Narusaka M."/>
            <person name="Shin-i T."/>
            <person name="Nakagawa M."/>
            <person name="Sakamoto N."/>
            <person name="Oishi K."/>
            <person name="Kohara Y."/>
            <person name="Kobayashi M."/>
            <person name="Toyoda A."/>
            <person name="Sakaki Y."/>
            <person name="Sakurai T."/>
            <person name="Iida K."/>
            <person name="Akiyama K."/>
            <person name="Satou M."/>
            <person name="Toyoda T."/>
            <person name="Konagaya A."/>
            <person name="Carninci P."/>
            <person name="Kawai J."/>
            <person name="Hayashizaki Y."/>
            <person name="Shinozaki K."/>
        </authorList>
    </citation>
    <scope>NUCLEOTIDE SEQUENCE [LARGE SCALE MRNA]</scope>
    <source>
        <strain>cv. Columbia</strain>
    </source>
</reference>
<reference key="5">
    <citation type="submission" date="2002-03" db="EMBL/GenBank/DDBJ databases">
        <title>Full-length cDNA from Arabidopsis thaliana.</title>
        <authorList>
            <person name="Brover V.V."/>
            <person name="Troukhan M.E."/>
            <person name="Alexandrov N.A."/>
            <person name="Lu Y.-P."/>
            <person name="Flavell R.B."/>
            <person name="Feldmann K.A."/>
        </authorList>
    </citation>
    <scope>NUCLEOTIDE SEQUENCE [LARGE SCALE MRNA]</scope>
</reference>
<reference key="6">
    <citation type="journal article" date="2003" name="Plant Physiol.">
        <title>Identification and characterization of aluminium tolerance loci in Arabidopsis (Landsberg erecta x Columbia) by quantitative trait locus mapping. A physiologically simple but genetically complex trait.</title>
        <authorList>
            <person name="Hoekenga O.A."/>
            <person name="Vision T.J."/>
            <person name="Shaff J.E."/>
            <person name="Monforte A.J."/>
            <person name="Lee G.P."/>
            <person name="Howell S.H."/>
            <person name="Kochian L.V."/>
        </authorList>
    </citation>
    <scope>FUNCTION</scope>
</reference>
<reference key="7">
    <citation type="journal article" date="2018" name="Plant Cell Physiol.">
        <title>CYSTM, a novel non-secreted cysteine-rich peptide family, involved in environmental stresses in Arabidopsis thaliana.</title>
        <authorList>
            <person name="Xu Y."/>
            <person name="Yu Z."/>
            <person name="Zhang D."/>
            <person name="Huang J."/>
            <person name="Wu C."/>
            <person name="Yang G."/>
            <person name="Yan K."/>
            <person name="Zhang S."/>
            <person name="Zheng C."/>
        </authorList>
    </citation>
    <scope>FUNCTION</scope>
    <scope>INTERACTION WITH CYSTM7 AND WIH1/CYSTM13</scope>
    <scope>TISSUE SPECIFICITY</scope>
    <scope>INDUCTION BY OXIDATION AND DROUGHT</scope>
    <scope>SUBCELLULAR LOCATION</scope>
    <source>
        <strain>cv. Columbia</strain>
    </source>
</reference>
<dbReference type="EMBL" id="AC000098">
    <property type="protein sequence ID" value="AAB71443.1"/>
    <property type="molecule type" value="Genomic_DNA"/>
</dbReference>
<dbReference type="EMBL" id="CP002684">
    <property type="protein sequence ID" value="AEE27827.1"/>
    <property type="molecule type" value="Genomic_DNA"/>
</dbReference>
<dbReference type="EMBL" id="AF360144">
    <property type="protein sequence ID" value="AAK25854.1"/>
    <property type="molecule type" value="mRNA"/>
</dbReference>
<dbReference type="EMBL" id="AY056369">
    <property type="protein sequence ID" value="AAL07255.1"/>
    <property type="molecule type" value="mRNA"/>
</dbReference>
<dbReference type="EMBL" id="AK226423">
    <property type="protein sequence ID" value="BAE98567.1"/>
    <property type="molecule type" value="mRNA"/>
</dbReference>
<dbReference type="EMBL" id="AY085980">
    <property type="protein sequence ID" value="AAM63190.1"/>
    <property type="molecule type" value="mRNA"/>
</dbReference>
<dbReference type="PIR" id="C86188">
    <property type="entry name" value="C86188"/>
</dbReference>
<dbReference type="RefSeq" id="NP_563734.1">
    <property type="nucleotide sequence ID" value="NM_100413.4"/>
</dbReference>
<dbReference type="STRING" id="3702.O23035"/>
<dbReference type="PaxDb" id="3702-AT1G05340.1"/>
<dbReference type="EnsemblPlants" id="AT1G05340.1">
    <property type="protein sequence ID" value="AT1G05340.1"/>
    <property type="gene ID" value="AT1G05340"/>
</dbReference>
<dbReference type="GeneID" id="837033"/>
<dbReference type="Gramene" id="AT1G05340.1">
    <property type="protein sequence ID" value="AT1G05340.1"/>
    <property type="gene ID" value="AT1G05340"/>
</dbReference>
<dbReference type="KEGG" id="ath:AT1G05340"/>
<dbReference type="Araport" id="AT1G05340"/>
<dbReference type="TAIR" id="AT1G05340">
    <property type="gene designation" value="ATHCYSTM1"/>
</dbReference>
<dbReference type="eggNOG" id="ENOG502S924">
    <property type="taxonomic scope" value="Eukaryota"/>
</dbReference>
<dbReference type="HOGENOM" id="CLU_128451_2_2_1"/>
<dbReference type="InParanoid" id="O23035"/>
<dbReference type="OMA" id="GYPTNDP"/>
<dbReference type="OrthoDB" id="1109608at2759"/>
<dbReference type="PhylomeDB" id="O23035"/>
<dbReference type="PRO" id="PR:O23035"/>
<dbReference type="Proteomes" id="UP000006548">
    <property type="component" value="Chromosome 1"/>
</dbReference>
<dbReference type="ExpressionAtlas" id="O23035">
    <property type="expression patterns" value="baseline and differential"/>
</dbReference>
<dbReference type="GO" id="GO:0005737">
    <property type="term" value="C:cytoplasm"/>
    <property type="evidence" value="ECO:0000314"/>
    <property type="project" value="TAIR"/>
</dbReference>
<dbReference type="GO" id="GO:0005634">
    <property type="term" value="C:nucleus"/>
    <property type="evidence" value="ECO:0000314"/>
    <property type="project" value="UniProtKB"/>
</dbReference>
<dbReference type="GO" id="GO:0005886">
    <property type="term" value="C:plasma membrane"/>
    <property type="evidence" value="ECO:0000314"/>
    <property type="project" value="UniProtKB"/>
</dbReference>
<dbReference type="InterPro" id="IPR028144">
    <property type="entry name" value="CYSTM_dom"/>
</dbReference>
<dbReference type="InterPro" id="IPR044850">
    <property type="entry name" value="WIH1-like"/>
</dbReference>
<dbReference type="PANTHER" id="PTHR31568:SF116">
    <property type="entry name" value="PROTEIN CYSTEINE-RICH TRANSMEMBRANE MODULE 1"/>
    <property type="match status" value="1"/>
</dbReference>
<dbReference type="PANTHER" id="PTHR31568">
    <property type="entry name" value="RCG49325, ISOFORM CRA_A"/>
    <property type="match status" value="1"/>
</dbReference>
<dbReference type="Pfam" id="PF12734">
    <property type="entry name" value="CYSTM"/>
    <property type="match status" value="1"/>
</dbReference>
<protein>
    <recommendedName>
        <fullName evidence="5">Protein CYSTEINE-RICH TRANSMEMBRANE MODULE 1</fullName>
        <shortName evidence="5">AthCYSTM1</shortName>
    </recommendedName>
</protein>
<name>CSTM1_ARATH</name>
<keyword id="KW-1003">Cell membrane</keyword>
<keyword id="KW-0472">Membrane</keyword>
<keyword id="KW-0539">Nucleus</keyword>
<keyword id="KW-1185">Reference proteome</keyword>
<keyword id="KW-0812">Transmembrane</keyword>
<keyword id="KW-1133">Transmembrane helix</keyword>
<organism>
    <name type="scientific">Arabidopsis thaliana</name>
    <name type="common">Mouse-ear cress</name>
    <dbReference type="NCBI Taxonomy" id="3702"/>
    <lineage>
        <taxon>Eukaryota</taxon>
        <taxon>Viridiplantae</taxon>
        <taxon>Streptophyta</taxon>
        <taxon>Embryophyta</taxon>
        <taxon>Tracheophyta</taxon>
        <taxon>Spermatophyta</taxon>
        <taxon>Magnoliopsida</taxon>
        <taxon>eudicotyledons</taxon>
        <taxon>Gunneridae</taxon>
        <taxon>Pentapetalae</taxon>
        <taxon>rosids</taxon>
        <taxon>malvids</taxon>
        <taxon>Brassicales</taxon>
        <taxon>Brassicaceae</taxon>
        <taxon>Camelineae</taxon>
        <taxon>Arabidopsis</taxon>
    </lineage>
</organism>
<comment type="function">
    <text evidence="3 5">May be involved in aluminium (Al) tolerance (PubMed:12805622). Involved in resistance to abiotic stress (PubMed:29272523).</text>
</comment>
<comment type="subunit">
    <text evidence="4">Heterodimers (PubMed:29272523). Binds weakly to CYSTM7 and WIH1/CYSTM13 (PubMed:29272523).</text>
</comment>
<comment type="subcellular location">
    <subcellularLocation>
        <location evidence="4">Cell membrane</location>
        <topology evidence="1">Single-pass membrane protein</topology>
    </subcellularLocation>
    <subcellularLocation>
        <location evidence="4">Nucleus</location>
    </subcellularLocation>
</comment>
<comment type="tissue specificity">
    <text evidence="4">Mostly expressed in roots, flowers and siliques and, to a lower extent, in stems and leaves.</text>
</comment>
<comment type="induction">
    <text evidence="4">Induced by drought and oxidation stress.</text>
</comment>
<comment type="similarity">
    <text evidence="6">Belongs to the CYSTM1 family.</text>
</comment>
<sequence>MSQYDHNQSAGANPPPPMSTCTSPPPPIGYPTNQPSHGSVAQGKVETKSKGDGFFKGCLAAMCCCCALDICF</sequence>
<accession>O23035</accession>